<proteinExistence type="inferred from homology"/>
<feature type="chain" id="PRO_0000339800" description="UPF0597 protein CLK_1462">
    <location>
        <begin position="1"/>
        <end position="434"/>
    </location>
</feature>
<evidence type="ECO:0000255" key="1">
    <source>
        <dbReference type="HAMAP-Rule" id="MF_01845"/>
    </source>
</evidence>
<accession>B1KUQ8</accession>
<dbReference type="EMBL" id="CP000962">
    <property type="protein sequence ID" value="ACA55726.1"/>
    <property type="molecule type" value="Genomic_DNA"/>
</dbReference>
<dbReference type="RefSeq" id="WP_012343675.1">
    <property type="nucleotide sequence ID" value="NC_010520.1"/>
</dbReference>
<dbReference type="SMR" id="B1KUQ8"/>
<dbReference type="KEGG" id="cbl:CLK_1462"/>
<dbReference type="HOGENOM" id="CLU_051840_0_0_9"/>
<dbReference type="GO" id="GO:0080146">
    <property type="term" value="F:L-cysteine desulfhydrase activity"/>
    <property type="evidence" value="ECO:0007669"/>
    <property type="project" value="TreeGrafter"/>
</dbReference>
<dbReference type="GO" id="GO:0019450">
    <property type="term" value="P:L-cysteine catabolic process to pyruvate"/>
    <property type="evidence" value="ECO:0007669"/>
    <property type="project" value="TreeGrafter"/>
</dbReference>
<dbReference type="HAMAP" id="MF_01845">
    <property type="entry name" value="UPF0597"/>
    <property type="match status" value="1"/>
</dbReference>
<dbReference type="InterPro" id="IPR005130">
    <property type="entry name" value="Ser_deHydtase-like_asu"/>
</dbReference>
<dbReference type="InterPro" id="IPR021144">
    <property type="entry name" value="UPF0597"/>
</dbReference>
<dbReference type="PANTHER" id="PTHR30501">
    <property type="entry name" value="UPF0597 PROTEIN YHAM"/>
    <property type="match status" value="1"/>
</dbReference>
<dbReference type="PANTHER" id="PTHR30501:SF2">
    <property type="entry name" value="UPF0597 PROTEIN YHAM"/>
    <property type="match status" value="1"/>
</dbReference>
<dbReference type="Pfam" id="PF03313">
    <property type="entry name" value="SDH_alpha"/>
    <property type="match status" value="1"/>
</dbReference>
<dbReference type="PIRSF" id="PIRSF006054">
    <property type="entry name" value="UCP006054"/>
    <property type="match status" value="1"/>
</dbReference>
<protein>
    <recommendedName>
        <fullName evidence="1">UPF0597 protein CLK_1462</fullName>
    </recommendedName>
</protein>
<gene>
    <name type="ordered locus">CLK_1462</name>
</gene>
<organism>
    <name type="scientific">Clostridium botulinum (strain Loch Maree / Type A3)</name>
    <dbReference type="NCBI Taxonomy" id="498214"/>
    <lineage>
        <taxon>Bacteria</taxon>
        <taxon>Bacillati</taxon>
        <taxon>Bacillota</taxon>
        <taxon>Clostridia</taxon>
        <taxon>Eubacteriales</taxon>
        <taxon>Clostridiaceae</taxon>
        <taxon>Clostridium</taxon>
    </lineage>
</organism>
<sequence>MSRLSKEEIGKRLLELIKDETKPAIGCTEPVAVAFTVATGKKYMTGEVLKIDLKVSKNILKNGKSVTIPNTEVCGLDIAGALGEICGDSEEGLFVFKNVNKDYLDKAKEMIKNKVVTLNPIENTDPVFVEATLKGEKDEVIAILRGGHTNIEKIIVNGTIAFEKDNKNEKDNKDCDFIKELSLKDIREITEDIGIEKLDFIMDGIEMNKEAAKEGLKREKGLTLGSSLLKLQQEGKLGKDSATIARILTAAGSDLRMGGGMCPIMTSGGSGNQGLCVILPINVVAEDIKASKEKLQRAVFFGHAVNNFVKKYTGKLSAICGCAIAAGIGATAGIAWLLGGKDKEINGAILNMLANLTGMVCDGAKGSCAIKLSTSASEAVISAYLALNDIIVPNNTGIIGNTVEDTINNLGMLCKDGFYKADDVMLSIACKEVI</sequence>
<name>Y1462_CLOBM</name>
<reference key="1">
    <citation type="journal article" date="2007" name="PLoS ONE">
        <title>Analysis of the neurotoxin complex genes in Clostridium botulinum A1-A4 and B1 strains: BoNT/A3, /Ba4 and /B1 clusters are located within plasmids.</title>
        <authorList>
            <person name="Smith T.J."/>
            <person name="Hill K.K."/>
            <person name="Foley B.T."/>
            <person name="Detter J.C."/>
            <person name="Munk A.C."/>
            <person name="Bruce D.C."/>
            <person name="Doggett N.A."/>
            <person name="Smith L.A."/>
            <person name="Marks J.D."/>
            <person name="Xie G."/>
            <person name="Brettin T.S."/>
        </authorList>
    </citation>
    <scope>NUCLEOTIDE SEQUENCE [LARGE SCALE GENOMIC DNA]</scope>
    <source>
        <strain>Loch Maree / Type A3</strain>
    </source>
</reference>
<comment type="similarity">
    <text evidence="1">Belongs to the UPF0597 family.</text>
</comment>